<proteinExistence type="evidence at transcript level"/>
<evidence type="ECO:0000256" key="1">
    <source>
        <dbReference type="SAM" id="MobiDB-lite"/>
    </source>
</evidence>
<evidence type="ECO:0000269" key="2">
    <source>
    </source>
</evidence>
<evidence type="ECO:0000305" key="3"/>
<dbReference type="EMBL" id="AC079677">
    <property type="protein sequence ID" value="AAG52639.1"/>
    <property type="molecule type" value="Genomic_DNA"/>
</dbReference>
<dbReference type="EMBL" id="AC083835">
    <property type="protein sequence ID" value="AAG50627.1"/>
    <property type="status" value="ALT_SEQ"/>
    <property type="molecule type" value="Genomic_DNA"/>
</dbReference>
<dbReference type="EMBL" id="CP002684">
    <property type="protein sequence ID" value="AEE32138.1"/>
    <property type="molecule type" value="Genomic_DNA"/>
</dbReference>
<dbReference type="EMBL" id="AY064987">
    <property type="protein sequence ID" value="AAL57640.1"/>
    <property type="molecule type" value="mRNA"/>
</dbReference>
<dbReference type="EMBL" id="AY113013">
    <property type="protein sequence ID" value="AAM47321.1"/>
    <property type="molecule type" value="mRNA"/>
</dbReference>
<dbReference type="EMBL" id="AY084924">
    <property type="protein sequence ID" value="AAM61486.1"/>
    <property type="molecule type" value="mRNA"/>
</dbReference>
<dbReference type="PIR" id="G96512">
    <property type="entry name" value="G96512"/>
</dbReference>
<dbReference type="RefSeq" id="NP_564499.3">
    <molecule id="Q9C6A9-1"/>
    <property type="nucleotide sequence ID" value="NM_103614.5"/>
</dbReference>
<dbReference type="SMR" id="Q9C6A9"/>
<dbReference type="BioGRID" id="26349">
    <property type="interactions" value="5"/>
</dbReference>
<dbReference type="FunCoup" id="Q9C6A9">
    <property type="interactions" value="2408"/>
</dbReference>
<dbReference type="STRING" id="3702.Q9C6A9"/>
<dbReference type="iPTMnet" id="Q9C6A9"/>
<dbReference type="PaxDb" id="3702-AT1G47210.2"/>
<dbReference type="ProteomicsDB" id="223957">
    <molecule id="Q9C6A9-1"/>
</dbReference>
<dbReference type="EnsemblPlants" id="AT1G47210.2">
    <molecule id="Q9C6A9-1"/>
    <property type="protein sequence ID" value="AT1G47210.2"/>
    <property type="gene ID" value="AT1G47210"/>
</dbReference>
<dbReference type="GeneID" id="841124"/>
<dbReference type="Gramene" id="AT1G47210.2">
    <molecule id="Q9C6A9-1"/>
    <property type="protein sequence ID" value="AT1G47210.2"/>
    <property type="gene ID" value="AT1G47210"/>
</dbReference>
<dbReference type="KEGG" id="ath:AT1G47210"/>
<dbReference type="Araport" id="AT1G47210"/>
<dbReference type="TAIR" id="AT1G47210">
    <property type="gene designation" value="CYCA3"/>
</dbReference>
<dbReference type="eggNOG" id="KOG0654">
    <property type="taxonomic scope" value="Eukaryota"/>
</dbReference>
<dbReference type="HOGENOM" id="CLU_020695_2_2_1"/>
<dbReference type="InParanoid" id="Q9C6A9"/>
<dbReference type="OMA" id="WITEEFR"/>
<dbReference type="PhylomeDB" id="Q9C6A9"/>
<dbReference type="PRO" id="PR:Q9C6A9"/>
<dbReference type="Proteomes" id="UP000006548">
    <property type="component" value="Chromosome 1"/>
</dbReference>
<dbReference type="ExpressionAtlas" id="Q9C6A9">
    <property type="expression patterns" value="baseline and differential"/>
</dbReference>
<dbReference type="GO" id="GO:0005737">
    <property type="term" value="C:cytoplasm"/>
    <property type="evidence" value="ECO:0007005"/>
    <property type="project" value="TAIR"/>
</dbReference>
<dbReference type="GO" id="GO:0005634">
    <property type="term" value="C:nucleus"/>
    <property type="evidence" value="ECO:0007005"/>
    <property type="project" value="TAIR"/>
</dbReference>
<dbReference type="GO" id="GO:0016538">
    <property type="term" value="F:cyclin-dependent protein serine/threonine kinase regulator activity"/>
    <property type="evidence" value="ECO:0007669"/>
    <property type="project" value="InterPro"/>
</dbReference>
<dbReference type="GO" id="GO:0051301">
    <property type="term" value="P:cell division"/>
    <property type="evidence" value="ECO:0007669"/>
    <property type="project" value="UniProtKB-KW"/>
</dbReference>
<dbReference type="GO" id="GO:0044772">
    <property type="term" value="P:mitotic cell cycle phase transition"/>
    <property type="evidence" value="ECO:0007669"/>
    <property type="project" value="InterPro"/>
</dbReference>
<dbReference type="CDD" id="cd20506">
    <property type="entry name" value="CYCLIN_AtCycA-like_rpt2"/>
    <property type="match status" value="1"/>
</dbReference>
<dbReference type="CDD" id="cd20562">
    <property type="entry name" value="CYCLIN_AtCycA_like_rpt1"/>
    <property type="match status" value="1"/>
</dbReference>
<dbReference type="FunFam" id="1.10.472.10:FF:000013">
    <property type="entry name" value="Cyclin A1"/>
    <property type="match status" value="1"/>
</dbReference>
<dbReference type="FunFam" id="1.10.472.10:FF:000167">
    <property type="entry name" value="Mitotic cyclin 6"/>
    <property type="match status" value="1"/>
</dbReference>
<dbReference type="Gene3D" id="1.10.472.10">
    <property type="entry name" value="Cyclin-like"/>
    <property type="match status" value="2"/>
</dbReference>
<dbReference type="InterPro" id="IPR039361">
    <property type="entry name" value="Cyclin"/>
</dbReference>
<dbReference type="InterPro" id="IPR013763">
    <property type="entry name" value="Cyclin-like_dom"/>
</dbReference>
<dbReference type="InterPro" id="IPR036915">
    <property type="entry name" value="Cyclin-like_sf"/>
</dbReference>
<dbReference type="InterPro" id="IPR046965">
    <property type="entry name" value="Cyclin_A/B-like"/>
</dbReference>
<dbReference type="InterPro" id="IPR004367">
    <property type="entry name" value="Cyclin_C-dom"/>
</dbReference>
<dbReference type="InterPro" id="IPR006671">
    <property type="entry name" value="Cyclin_N"/>
</dbReference>
<dbReference type="PANTHER" id="PTHR10177">
    <property type="entry name" value="CYCLINS"/>
    <property type="match status" value="1"/>
</dbReference>
<dbReference type="Pfam" id="PF02984">
    <property type="entry name" value="Cyclin_C"/>
    <property type="match status" value="1"/>
</dbReference>
<dbReference type="Pfam" id="PF00134">
    <property type="entry name" value="Cyclin_N"/>
    <property type="match status" value="1"/>
</dbReference>
<dbReference type="PIRSF" id="PIRSF001771">
    <property type="entry name" value="Cyclin_A_B_D_E"/>
    <property type="match status" value="1"/>
</dbReference>
<dbReference type="SMART" id="SM00385">
    <property type="entry name" value="CYCLIN"/>
    <property type="match status" value="2"/>
</dbReference>
<dbReference type="SMART" id="SM01332">
    <property type="entry name" value="Cyclin_C"/>
    <property type="match status" value="1"/>
</dbReference>
<dbReference type="SUPFAM" id="SSF47954">
    <property type="entry name" value="Cyclin-like"/>
    <property type="match status" value="2"/>
</dbReference>
<reference key="1">
    <citation type="journal article" date="2000" name="Nature">
        <title>Sequence and analysis of chromosome 1 of the plant Arabidopsis thaliana.</title>
        <authorList>
            <person name="Theologis A."/>
            <person name="Ecker J.R."/>
            <person name="Palm C.J."/>
            <person name="Federspiel N.A."/>
            <person name="Kaul S."/>
            <person name="White O."/>
            <person name="Alonso J."/>
            <person name="Altafi H."/>
            <person name="Araujo R."/>
            <person name="Bowman C.L."/>
            <person name="Brooks S.Y."/>
            <person name="Buehler E."/>
            <person name="Chan A."/>
            <person name="Chao Q."/>
            <person name="Chen H."/>
            <person name="Cheuk R.F."/>
            <person name="Chin C.W."/>
            <person name="Chung M.K."/>
            <person name="Conn L."/>
            <person name="Conway A.B."/>
            <person name="Conway A.R."/>
            <person name="Creasy T.H."/>
            <person name="Dewar K."/>
            <person name="Dunn P."/>
            <person name="Etgu P."/>
            <person name="Feldblyum T.V."/>
            <person name="Feng J.-D."/>
            <person name="Fong B."/>
            <person name="Fujii C.Y."/>
            <person name="Gill J.E."/>
            <person name="Goldsmith A.D."/>
            <person name="Haas B."/>
            <person name="Hansen N.F."/>
            <person name="Hughes B."/>
            <person name="Huizar L."/>
            <person name="Hunter J.L."/>
            <person name="Jenkins J."/>
            <person name="Johnson-Hopson C."/>
            <person name="Khan S."/>
            <person name="Khaykin E."/>
            <person name="Kim C.J."/>
            <person name="Koo H.L."/>
            <person name="Kremenetskaia I."/>
            <person name="Kurtz D.B."/>
            <person name="Kwan A."/>
            <person name="Lam B."/>
            <person name="Langin-Hooper S."/>
            <person name="Lee A."/>
            <person name="Lee J.M."/>
            <person name="Lenz C.A."/>
            <person name="Li J.H."/>
            <person name="Li Y.-P."/>
            <person name="Lin X."/>
            <person name="Liu S.X."/>
            <person name="Liu Z.A."/>
            <person name="Luros J.S."/>
            <person name="Maiti R."/>
            <person name="Marziali A."/>
            <person name="Militscher J."/>
            <person name="Miranda M."/>
            <person name="Nguyen M."/>
            <person name="Nierman W.C."/>
            <person name="Osborne B.I."/>
            <person name="Pai G."/>
            <person name="Peterson J."/>
            <person name="Pham P.K."/>
            <person name="Rizzo M."/>
            <person name="Rooney T."/>
            <person name="Rowley D."/>
            <person name="Sakano H."/>
            <person name="Salzberg S.L."/>
            <person name="Schwartz J.R."/>
            <person name="Shinn P."/>
            <person name="Southwick A.M."/>
            <person name="Sun H."/>
            <person name="Tallon L.J."/>
            <person name="Tambunga G."/>
            <person name="Toriumi M.J."/>
            <person name="Town C.D."/>
            <person name="Utterback T."/>
            <person name="Van Aken S."/>
            <person name="Vaysberg M."/>
            <person name="Vysotskaia V.S."/>
            <person name="Walker M."/>
            <person name="Wu D."/>
            <person name="Yu G."/>
            <person name="Fraser C.M."/>
            <person name="Venter J.C."/>
            <person name="Davis R.W."/>
        </authorList>
    </citation>
    <scope>NUCLEOTIDE SEQUENCE [LARGE SCALE GENOMIC DNA]</scope>
    <source>
        <strain>cv. Columbia</strain>
    </source>
</reference>
<reference key="2">
    <citation type="journal article" date="2017" name="Plant J.">
        <title>Araport11: a complete reannotation of the Arabidopsis thaliana reference genome.</title>
        <authorList>
            <person name="Cheng C.Y."/>
            <person name="Krishnakumar V."/>
            <person name="Chan A.P."/>
            <person name="Thibaud-Nissen F."/>
            <person name="Schobel S."/>
            <person name="Town C.D."/>
        </authorList>
    </citation>
    <scope>GENOME REANNOTATION</scope>
    <source>
        <strain>cv. Columbia</strain>
    </source>
</reference>
<reference key="3">
    <citation type="journal article" date="2003" name="Science">
        <title>Empirical analysis of transcriptional activity in the Arabidopsis genome.</title>
        <authorList>
            <person name="Yamada K."/>
            <person name="Lim J."/>
            <person name="Dale J.M."/>
            <person name="Chen H."/>
            <person name="Shinn P."/>
            <person name="Palm C.J."/>
            <person name="Southwick A.M."/>
            <person name="Wu H.C."/>
            <person name="Kim C.J."/>
            <person name="Nguyen M."/>
            <person name="Pham P.K."/>
            <person name="Cheuk R.F."/>
            <person name="Karlin-Newmann G."/>
            <person name="Liu S.X."/>
            <person name="Lam B."/>
            <person name="Sakano H."/>
            <person name="Wu T."/>
            <person name="Yu G."/>
            <person name="Miranda M."/>
            <person name="Quach H.L."/>
            <person name="Tripp M."/>
            <person name="Chang C.H."/>
            <person name="Lee J.M."/>
            <person name="Toriumi M.J."/>
            <person name="Chan M.M."/>
            <person name="Tang C.C."/>
            <person name="Onodera C.S."/>
            <person name="Deng J.M."/>
            <person name="Akiyama K."/>
            <person name="Ansari Y."/>
            <person name="Arakawa T."/>
            <person name="Banh J."/>
            <person name="Banno F."/>
            <person name="Bowser L."/>
            <person name="Brooks S.Y."/>
            <person name="Carninci P."/>
            <person name="Chao Q."/>
            <person name="Choy N."/>
            <person name="Enju A."/>
            <person name="Goldsmith A.D."/>
            <person name="Gurjal M."/>
            <person name="Hansen N.F."/>
            <person name="Hayashizaki Y."/>
            <person name="Johnson-Hopson C."/>
            <person name="Hsuan V.W."/>
            <person name="Iida K."/>
            <person name="Karnes M."/>
            <person name="Khan S."/>
            <person name="Koesema E."/>
            <person name="Ishida J."/>
            <person name="Jiang P.X."/>
            <person name="Jones T."/>
            <person name="Kawai J."/>
            <person name="Kamiya A."/>
            <person name="Meyers C."/>
            <person name="Nakajima M."/>
            <person name="Narusaka M."/>
            <person name="Seki M."/>
            <person name="Sakurai T."/>
            <person name="Satou M."/>
            <person name="Tamse R."/>
            <person name="Vaysberg M."/>
            <person name="Wallender E.K."/>
            <person name="Wong C."/>
            <person name="Yamamura Y."/>
            <person name="Yuan S."/>
            <person name="Shinozaki K."/>
            <person name="Davis R.W."/>
            <person name="Theologis A."/>
            <person name="Ecker J.R."/>
        </authorList>
    </citation>
    <scope>NUCLEOTIDE SEQUENCE [LARGE SCALE MRNA]</scope>
    <source>
        <strain>cv. Columbia</strain>
    </source>
</reference>
<reference key="4">
    <citation type="submission" date="2002-03" db="EMBL/GenBank/DDBJ databases">
        <title>Full-length cDNA from Arabidopsis thaliana.</title>
        <authorList>
            <person name="Brover V.V."/>
            <person name="Troukhan M.E."/>
            <person name="Alexandrov N.A."/>
            <person name="Lu Y.-P."/>
            <person name="Flavell R.B."/>
            <person name="Feldmann K.A."/>
        </authorList>
    </citation>
    <scope>NUCLEOTIDE SEQUENCE [LARGE SCALE MRNA]</scope>
</reference>
<reference key="5">
    <citation type="journal article" date="2004" name="Plant Physiol.">
        <title>Genome-wide analysis of the cyclin family in Arabidopsis and comparative phylogenetic analysis of plant cyclin-like proteins.</title>
        <authorList>
            <person name="Wang G."/>
            <person name="Kong H."/>
            <person name="Sun Y."/>
            <person name="Zhang X."/>
            <person name="Zhang W."/>
            <person name="Altman N."/>
            <person name="dePamphilis C.W."/>
            <person name="Ma H."/>
        </authorList>
    </citation>
    <scope>GENE FAMILY</scope>
    <scope>NOMENCLATURE</scope>
</reference>
<reference key="6">
    <citation type="journal article" date="2006" name="Plant Cell">
        <title>The D-type cyclin CYCD3;1 is limiting for the G1-to-S-phase transition in Arabidopsis.</title>
        <authorList>
            <person name="Menges M."/>
            <person name="Samland A.K."/>
            <person name="Planchais S."/>
            <person name="Murray J.A.H."/>
        </authorList>
    </citation>
    <scope>DEVELOPMENTAL STAGE</scope>
</reference>
<feature type="chain" id="PRO_0000286999" description="Cyclin-A3-2">
    <location>
        <begin position="1"/>
        <end position="372"/>
    </location>
</feature>
<feature type="region of interest" description="Disordered" evidence="1">
    <location>
        <begin position="53"/>
        <end position="73"/>
    </location>
</feature>
<sequence length="372" mass="42461">MTEQEICVRVTRAAAKRKASTAMGIDGDRVNKKRVVLGELLNVSNVNLLANLNQKKETQKPKRNLKPPPAKQIKSAPVAIIDLESKSDIDSRSDDPQMCGPYVADIYEYLRQLEVKPKQRPLPDYIEKVQKDVTPSMRGVLVDWLVEVAEEYKLGSETLYLTVSHIDRFLSLKTVNKQKLQLVGVSAMLIASKYEEISPPKVDDFCYITDNTFSKQDVVKMEADILLALQFELGRPTINTFMRRFTRVAQDDFKVPHLQLEPLCCYLSELSILDYKTVKFVPSLLAASAVFLARFIIRPKQHPWNQMLEEYTKYKAADLQVCVGIIHDLYLSRRGGALQAVREKYKHHKFQCVATMPVSPELPVTFWEDVTI</sequence>
<keyword id="KW-0025">Alternative splicing</keyword>
<keyword id="KW-0131">Cell cycle</keyword>
<keyword id="KW-0132">Cell division</keyword>
<keyword id="KW-0195">Cyclin</keyword>
<keyword id="KW-1185">Reference proteome</keyword>
<name>CCA32_ARATH</name>
<organism>
    <name type="scientific">Arabidopsis thaliana</name>
    <name type="common">Mouse-ear cress</name>
    <dbReference type="NCBI Taxonomy" id="3702"/>
    <lineage>
        <taxon>Eukaryota</taxon>
        <taxon>Viridiplantae</taxon>
        <taxon>Streptophyta</taxon>
        <taxon>Embryophyta</taxon>
        <taxon>Tracheophyta</taxon>
        <taxon>Spermatophyta</taxon>
        <taxon>Magnoliopsida</taxon>
        <taxon>eudicotyledons</taxon>
        <taxon>Gunneridae</taxon>
        <taxon>Pentapetalae</taxon>
        <taxon>rosids</taxon>
        <taxon>malvids</taxon>
        <taxon>Brassicales</taxon>
        <taxon>Brassicaceae</taxon>
        <taxon>Camelineae</taxon>
        <taxon>Arabidopsis</taxon>
    </lineage>
</organism>
<accession>Q9C6A9</accession>
<accession>Q9C625</accession>
<protein>
    <recommendedName>
        <fullName>Cyclin-A3-2</fullName>
    </recommendedName>
    <alternativeName>
        <fullName>G2/mitotic-specific cyclin-A3-2</fullName>
        <shortName>CycA3;2</shortName>
    </alternativeName>
</protein>
<gene>
    <name type="primary">CYCA3-2</name>
    <name type="ordered locus">At1g47210</name>
    <name type="ORF">F2G19.30</name>
    <name type="ORF">F8G22.8</name>
</gene>
<comment type="alternative products">
    <event type="alternative splicing"/>
    <isoform>
        <id>Q9C6A9-1</id>
        <name>1</name>
        <sequence type="displayed"/>
    </isoform>
    <text>A number of isoforms are produced. According to EST sequences.</text>
</comment>
<comment type="developmental stage">
    <text evidence="2">Expressed in the G1/S phases.</text>
</comment>
<comment type="similarity">
    <text evidence="3">Belongs to the cyclin family. Cyclin AB subfamily.</text>
</comment>
<comment type="sequence caution" evidence="3">
    <conflict type="erroneous gene model prediction">
        <sequence resource="EMBL-CDS" id="AAG50627"/>
    </conflict>
</comment>